<feature type="chain" id="PRO_0000379511" description="ATP-dependent DNA helicase RecQ">
    <location>
        <begin position="1"/>
        <end position="591"/>
    </location>
</feature>
<feature type="domain" description="Helicase ATP-binding" evidence="2">
    <location>
        <begin position="27"/>
        <end position="196"/>
    </location>
</feature>
<feature type="domain" description="Helicase C-terminal" evidence="3">
    <location>
        <begin position="216"/>
        <end position="367"/>
    </location>
</feature>
<feature type="domain" description="HRDC" evidence="1">
    <location>
        <begin position="513"/>
        <end position="591"/>
    </location>
</feature>
<feature type="short sequence motif" description="DEAH box">
    <location>
        <begin position="139"/>
        <end position="142"/>
    </location>
</feature>
<feature type="binding site" evidence="2">
    <location>
        <begin position="40"/>
        <end position="47"/>
    </location>
    <ligand>
        <name>ATP</name>
        <dbReference type="ChEBI" id="CHEBI:30616"/>
    </ligand>
</feature>
<feature type="binding site" evidence="11">
    <location>
        <position position="374"/>
    </location>
    <ligand>
        <name>Zn(2+)</name>
        <dbReference type="ChEBI" id="CHEBI:29105"/>
    </ligand>
</feature>
<feature type="binding site" evidence="11">
    <location>
        <position position="391"/>
    </location>
    <ligand>
        <name>Zn(2+)</name>
        <dbReference type="ChEBI" id="CHEBI:29105"/>
    </ligand>
</feature>
<feature type="binding site" evidence="11">
    <location>
        <position position="394"/>
    </location>
    <ligand>
        <name>Zn(2+)</name>
        <dbReference type="ChEBI" id="CHEBI:29105"/>
    </ligand>
</feature>
<feature type="binding site" evidence="11">
    <location>
        <position position="397"/>
    </location>
    <ligand>
        <name>Zn(2+)</name>
        <dbReference type="ChEBI" id="CHEBI:29105"/>
    </ligand>
</feature>
<proteinExistence type="evidence at protein level"/>
<reference key="1">
    <citation type="submission" date="1997-10" db="EMBL/GenBank/DDBJ databases">
        <title>Sequence analysis of the Bacillus subtilis chromosome region between the terC and odhAB loci cloned in a yeast artificial chromosome.</title>
        <authorList>
            <person name="Lapidus A."/>
            <person name="Galleron N."/>
            <person name="Sorokin A."/>
            <person name="Ehrlich S.D."/>
        </authorList>
    </citation>
    <scope>NUCLEOTIDE SEQUENCE [GENOMIC DNA]</scope>
</reference>
<reference key="2">
    <citation type="journal article" date="1997" name="Nature">
        <title>The complete genome sequence of the Gram-positive bacterium Bacillus subtilis.</title>
        <authorList>
            <person name="Kunst F."/>
            <person name="Ogasawara N."/>
            <person name="Moszer I."/>
            <person name="Albertini A.M."/>
            <person name="Alloni G."/>
            <person name="Azevedo V."/>
            <person name="Bertero M.G."/>
            <person name="Bessieres P."/>
            <person name="Bolotin A."/>
            <person name="Borchert S."/>
            <person name="Borriss R."/>
            <person name="Boursier L."/>
            <person name="Brans A."/>
            <person name="Braun M."/>
            <person name="Brignell S.C."/>
            <person name="Bron S."/>
            <person name="Brouillet S."/>
            <person name="Bruschi C.V."/>
            <person name="Caldwell B."/>
            <person name="Capuano V."/>
            <person name="Carter N.M."/>
            <person name="Choi S.-K."/>
            <person name="Codani J.-J."/>
            <person name="Connerton I.F."/>
            <person name="Cummings N.J."/>
            <person name="Daniel R.A."/>
            <person name="Denizot F."/>
            <person name="Devine K.M."/>
            <person name="Duesterhoeft A."/>
            <person name="Ehrlich S.D."/>
            <person name="Emmerson P.T."/>
            <person name="Entian K.-D."/>
            <person name="Errington J."/>
            <person name="Fabret C."/>
            <person name="Ferrari E."/>
            <person name="Foulger D."/>
            <person name="Fritz C."/>
            <person name="Fujita M."/>
            <person name="Fujita Y."/>
            <person name="Fuma S."/>
            <person name="Galizzi A."/>
            <person name="Galleron N."/>
            <person name="Ghim S.-Y."/>
            <person name="Glaser P."/>
            <person name="Goffeau A."/>
            <person name="Golightly E.J."/>
            <person name="Grandi G."/>
            <person name="Guiseppi G."/>
            <person name="Guy B.J."/>
            <person name="Haga K."/>
            <person name="Haiech J."/>
            <person name="Harwood C.R."/>
            <person name="Henaut A."/>
            <person name="Hilbert H."/>
            <person name="Holsappel S."/>
            <person name="Hosono S."/>
            <person name="Hullo M.-F."/>
            <person name="Itaya M."/>
            <person name="Jones L.-M."/>
            <person name="Joris B."/>
            <person name="Karamata D."/>
            <person name="Kasahara Y."/>
            <person name="Klaerr-Blanchard M."/>
            <person name="Klein C."/>
            <person name="Kobayashi Y."/>
            <person name="Koetter P."/>
            <person name="Koningstein G."/>
            <person name="Krogh S."/>
            <person name="Kumano M."/>
            <person name="Kurita K."/>
            <person name="Lapidus A."/>
            <person name="Lardinois S."/>
            <person name="Lauber J."/>
            <person name="Lazarevic V."/>
            <person name="Lee S.-M."/>
            <person name="Levine A."/>
            <person name="Liu H."/>
            <person name="Masuda S."/>
            <person name="Mauel C."/>
            <person name="Medigue C."/>
            <person name="Medina N."/>
            <person name="Mellado R.P."/>
            <person name="Mizuno M."/>
            <person name="Moestl D."/>
            <person name="Nakai S."/>
            <person name="Noback M."/>
            <person name="Noone D."/>
            <person name="O'Reilly M."/>
            <person name="Ogawa K."/>
            <person name="Ogiwara A."/>
            <person name="Oudega B."/>
            <person name="Park S.-H."/>
            <person name="Parro V."/>
            <person name="Pohl T.M."/>
            <person name="Portetelle D."/>
            <person name="Porwollik S."/>
            <person name="Prescott A.M."/>
            <person name="Presecan E."/>
            <person name="Pujic P."/>
            <person name="Purnelle B."/>
            <person name="Rapoport G."/>
            <person name="Rey M."/>
            <person name="Reynolds S."/>
            <person name="Rieger M."/>
            <person name="Rivolta C."/>
            <person name="Rocha E."/>
            <person name="Roche B."/>
            <person name="Rose M."/>
            <person name="Sadaie Y."/>
            <person name="Sato T."/>
            <person name="Scanlan E."/>
            <person name="Schleich S."/>
            <person name="Schroeter R."/>
            <person name="Scoffone F."/>
            <person name="Sekiguchi J."/>
            <person name="Sekowska A."/>
            <person name="Seror S.J."/>
            <person name="Serror P."/>
            <person name="Shin B.-S."/>
            <person name="Soldo B."/>
            <person name="Sorokin A."/>
            <person name="Tacconi E."/>
            <person name="Takagi T."/>
            <person name="Takahashi H."/>
            <person name="Takemaru K."/>
            <person name="Takeuchi M."/>
            <person name="Tamakoshi A."/>
            <person name="Tanaka T."/>
            <person name="Terpstra P."/>
            <person name="Tognoni A."/>
            <person name="Tosato V."/>
            <person name="Uchiyama S."/>
            <person name="Vandenbol M."/>
            <person name="Vannier F."/>
            <person name="Vassarotti A."/>
            <person name="Viari A."/>
            <person name="Wambutt R."/>
            <person name="Wedler E."/>
            <person name="Wedler H."/>
            <person name="Weitzenegger T."/>
            <person name="Winters P."/>
            <person name="Wipat A."/>
            <person name="Yamamoto H."/>
            <person name="Yamane K."/>
            <person name="Yasumoto K."/>
            <person name="Yata K."/>
            <person name="Yoshida K."/>
            <person name="Yoshikawa H.-F."/>
            <person name="Zumstein E."/>
            <person name="Yoshikawa H."/>
            <person name="Danchin A."/>
        </authorList>
    </citation>
    <scope>NUCLEOTIDE SEQUENCE [LARGE SCALE GENOMIC DNA]</scope>
    <source>
        <strain>168</strain>
    </source>
</reference>
<reference key="3">
    <citation type="journal article" date="1998" name="J. Bacteriol.">
        <title>Genetic recombination in Bacillus subtilis 168: effects of recU and recS mutations on DNA repair and homologous recombination.</title>
        <authorList>
            <person name="Fernandez S."/>
            <person name="Sorokin A."/>
            <person name="Alonso J.C."/>
        </authorList>
    </citation>
    <scope>IDENTIFICATION</scope>
    <source>
        <strain>168 / YB886 / BG214</strain>
    </source>
</reference>
<reference key="4">
    <citation type="journal article" date="2006" name="J. Bacteriol.">
        <title>Recruitment of Bacillus subtilis RecN to DNA double-strand breaks in the absence of DNA end processing.</title>
        <authorList>
            <person name="Sanchez H."/>
            <person name="Kidane D."/>
            <person name="Castillo Cozar M."/>
            <person name="Graumann P.L."/>
            <person name="Alonso J.C."/>
        </authorList>
    </citation>
    <scope>FUNCTION</scope>
    <scope>SUBCELLULAR LOCATION</scope>
    <scope>DISRUPTION PHENOTYPE</scope>
    <source>
        <strain>168 / YB886 / BG214</strain>
    </source>
</reference>
<reference key="5">
    <citation type="journal article" date="2007" name="EMBO J.">
        <title>Anticipating chromosomal replication fork arrest: SSB targets repair DNA helicases to active forks.</title>
        <authorList>
            <person name="Lecointe F."/>
            <person name="Serena C."/>
            <person name="Velten M."/>
            <person name="Costes A."/>
            <person name="McGovern S."/>
            <person name="Meile J.C."/>
            <person name="Errington J."/>
            <person name="Ehrlich S.D."/>
            <person name="Noirot P."/>
            <person name="Polard P."/>
        </authorList>
    </citation>
    <scope>INTERACTION WITH SSBA</scope>
    <scope>SUBCELLULAR LOCATION</scope>
    <source>
        <strain>168</strain>
    </source>
</reference>
<reference key="6">
    <citation type="journal article" date="2010" name="PLoS Genet.">
        <title>The C-terminal domain of the bacterial SSB protein acts as a DNA maintenance hub at active chromosome replication forks.</title>
        <authorList>
            <person name="Costes A."/>
            <person name="Lecointe F."/>
            <person name="McGovern S."/>
            <person name="Quevillon-Cheruel S."/>
            <person name="Polard P."/>
        </authorList>
    </citation>
    <scope>INTERACTION WITH SSBA</scope>
    <source>
        <strain>168</strain>
    </source>
</reference>
<reference key="7">
    <citation type="journal article" date="2014" name="J. Bacteriol.">
        <title>Characterization of biochemical properties of Bacillus subtilis RecQ helicase.</title>
        <authorList>
            <person name="Qin W."/>
            <person name="Liu N.N."/>
            <person name="Wang L."/>
            <person name="Zhou M."/>
            <person name="Ren H."/>
            <person name="Bugnard E."/>
            <person name="Liu J.L."/>
            <person name="Zhang L.H."/>
            <person name="Vendome J."/>
            <person name="Hu J.S."/>
            <person name="Xi X.G."/>
        </authorList>
    </citation>
    <scope>FUNCTION AS A 3'-5' DNA HELICASE</scope>
    <scope>FUNCTION AS AN ATPASE</scope>
    <scope>CATALYTIC ACTIVITY</scope>
    <scope>COFACTOR</scope>
    <scope>SUBUNIT</scope>
    <scope>INTERACTION WITH SSBA</scope>
    <scope>DNA-BINDING</scope>
</reference>
<comment type="function">
    <text evidence="4 7">An ATP-dependent DNA helicase which unwinds DNA in a 3'-5' direction (PubMed:25246477). Requires between 2 and 5 single-stranded nucleotides on the 3'-end to initiate unwinding, is not active on blunt-ended DNA (PubMed:25246477). Can target DNA replication, repair, and recombination intermediates; is active on forked, gapped and 3'-overhang DNA as well as 5'-flaps, Kappa joints, synthetic replication forks, and Holliday junctions (PubMed:25246477). Prefers ATP over dATP, is not active with other nucleotides (PubMed:25246477). Only unwinds short partial duplexes in vitro; SsbA enhances its activity on longer substrates (PubMed:25246477). Has ss- and dsDNA-stimulated ATPase activity (PubMed:25246477). Binds forked DNA strongly, ssDNA less well and dsDNA poorly (PubMed:25246477). Required for DNA repair and intramolecular recombination; probably has overlapping function with RecS (PubMed:16385024). It probably acts to help generate ssDNA from dsDNA breaks (PubMed:16385024, PubMed:25246477).</text>
</comment>
<comment type="catalytic activity">
    <reaction evidence="7">
        <text>Couples ATP hydrolysis with the unwinding of duplex DNA by translocating in the 3'-5' direction.</text>
        <dbReference type="EC" id="5.6.2.4"/>
    </reaction>
</comment>
<comment type="catalytic activity">
    <reaction evidence="7">
        <text>ATP + H2O = ADP + phosphate + H(+)</text>
        <dbReference type="Rhea" id="RHEA:13065"/>
        <dbReference type="ChEBI" id="CHEBI:15377"/>
        <dbReference type="ChEBI" id="CHEBI:15378"/>
        <dbReference type="ChEBI" id="CHEBI:30616"/>
        <dbReference type="ChEBI" id="CHEBI:43474"/>
        <dbReference type="ChEBI" id="CHEBI:456216"/>
    </reaction>
</comment>
<comment type="cofactor">
    <cofactor evidence="7">
        <name>Mg(2+)</name>
        <dbReference type="ChEBI" id="CHEBI:18420"/>
    </cofactor>
    <text evidence="7">Optimal helicase activity requires 0.8-1.2 Mg(2+) per ATP molecule (PubMed:25246477).</text>
</comment>
<comment type="cofactor">
    <cofactor evidence="7">
        <name>Zn(2+)</name>
        <dbReference type="ChEBI" id="CHEBI:29105"/>
    </cofactor>
    <text evidence="7">Bind 1 Zn(2+) per monomer (PubMed:25246477).</text>
</comment>
<comment type="subunit">
    <text evidence="6 7 11">Monomeric (Probable) (PubMed:25246477). Colocalizes with DNA pol III subunit gamma/tau (dnaX) (PubMed:17853894). Interacts with the 6 C-terminal residues of SSB (ssbA) (PubMed:21170359, PubMed:25246477).</text>
</comment>
<comment type="subcellular location">
    <subcellularLocation>
        <location evidence="4 5">Cytoplasm</location>
        <location evidence="4 5">Nucleoid</location>
    </subcellularLocation>
    <text evidence="4 5">Localized throughout the nucleoid in the presence or absence of DNA double-strand breaks (PubMed:16385024). Another study finds it localized in tight foci to the chromosome replication center at mid-cell during most to all of the cell cycle (PubMed:17853894).</text>
</comment>
<comment type="disruption phenotype">
    <text evidence="4">Cells lacking this gene are moderately sensitive to DNA-damaging agents (PubMed:16385024). Sensitivity increases in the presence of mutated AddAB nuclease (PubMed:16385024).</text>
</comment>
<comment type="similarity">
    <text evidence="10">Belongs to the helicase family. RecQ subfamily.</text>
</comment>
<name>RECQ_BACSU</name>
<protein>
    <recommendedName>
        <fullName evidence="8">ATP-dependent DNA helicase RecQ</fullName>
        <ecNumber evidence="7">5.6.2.4</ecNumber>
    </recommendedName>
    <alternativeName>
        <fullName evidence="10">DNA 3'-5' helicase RecQ</fullName>
    </alternativeName>
</protein>
<sequence length="591" mass="67353">MLHRAQSLLAHYFGYEKFRSGQDEAIRLVTEARQNTACIMPTGGGKSICYQIPALMFEGTTIVISPLISLMKDQVDALEEAGINAAYINSTQSNQEIYERLNGLKEGAYKLFYITPERLTSIEFIRILQGIDVPLVAIDEAHCISQWGHDFRPSYRNIEILFRELHDKPVIMALTATATPEVHDDICKQLHIQKENTVYTGFSRENLTFKVVKGENKDRFIDEYVQNNRHEAGIVYTATRKEADRIYERLKRNQVRAGRYHGGLADDVRKEQQERFLNDELQVMVATSAFGMGIDKSNIRFVLHAQIPKDMESYYQEAGRAGRDGLASECVLLFSPQDIMVQRFLIEQSEHEEKQKQDLKKLRQMVDYCHTEDCLQRFILMYFGEKEPDACGQCGNCTDTRAAHDVTREAQMVLSCIIRMKERFGKTMVAQVLAGSKNKKVLENGFSDLSTYGILKHQSVGEISDFIEFLISDDFIRMSDGTFPTLFVSSKGRNVLKGELSVARKEALKAAAITENDELFERLRMVRKEIAAEQGVPPFVVFSDQTLKEMSGKQPVNDDELLSIKGVGEQKRAKYGRLFLQEIQAYARMTD</sequence>
<accession>O34748</accession>
<accession>Q796C5</accession>
<gene>
    <name type="primary">recQ</name>
    <name evidence="9" type="synonym">yocI</name>
    <name type="ordered locus">BSU19220</name>
</gene>
<organism>
    <name type="scientific">Bacillus subtilis (strain 168)</name>
    <dbReference type="NCBI Taxonomy" id="224308"/>
    <lineage>
        <taxon>Bacteria</taxon>
        <taxon>Bacillati</taxon>
        <taxon>Bacillota</taxon>
        <taxon>Bacilli</taxon>
        <taxon>Bacillales</taxon>
        <taxon>Bacillaceae</taxon>
        <taxon>Bacillus</taxon>
    </lineage>
</organism>
<evidence type="ECO:0000255" key="1">
    <source>
        <dbReference type="PROSITE-ProRule" id="PRU00328"/>
    </source>
</evidence>
<evidence type="ECO:0000255" key="2">
    <source>
        <dbReference type="PROSITE-ProRule" id="PRU00541"/>
    </source>
</evidence>
<evidence type="ECO:0000255" key="3">
    <source>
        <dbReference type="PROSITE-ProRule" id="PRU00542"/>
    </source>
</evidence>
<evidence type="ECO:0000269" key="4">
    <source>
    </source>
</evidence>
<evidence type="ECO:0000269" key="5">
    <source>
    </source>
</evidence>
<evidence type="ECO:0000269" key="6">
    <source>
    </source>
</evidence>
<evidence type="ECO:0000269" key="7">
    <source>
    </source>
</evidence>
<evidence type="ECO:0000303" key="8">
    <source>
    </source>
</evidence>
<evidence type="ECO:0000303" key="9">
    <source ref="1"/>
</evidence>
<evidence type="ECO:0000305" key="10"/>
<evidence type="ECO:0000305" key="11">
    <source>
    </source>
</evidence>
<keyword id="KW-0067">ATP-binding</keyword>
<keyword id="KW-0963">Cytoplasm</keyword>
<keyword id="KW-0227">DNA damage</keyword>
<keyword id="KW-0233">DNA recombination</keyword>
<keyword id="KW-0234">DNA repair</keyword>
<keyword id="KW-0238">DNA-binding</keyword>
<keyword id="KW-0347">Helicase</keyword>
<keyword id="KW-0378">Hydrolase</keyword>
<keyword id="KW-0413">Isomerase</keyword>
<keyword id="KW-0479">Metal-binding</keyword>
<keyword id="KW-0547">Nucleotide-binding</keyword>
<keyword id="KW-1185">Reference proteome</keyword>
<keyword id="KW-0742">SOS response</keyword>
<keyword id="KW-0862">Zinc</keyword>
<dbReference type="EC" id="5.6.2.4" evidence="7"/>
<dbReference type="EMBL" id="AF027868">
    <property type="protein sequence ID" value="AAB84475.1"/>
    <property type="molecule type" value="Genomic_DNA"/>
</dbReference>
<dbReference type="EMBL" id="AL009126">
    <property type="protein sequence ID" value="CAB13814.1"/>
    <property type="molecule type" value="Genomic_DNA"/>
</dbReference>
<dbReference type="PIR" id="F69901">
    <property type="entry name" value="F69901"/>
</dbReference>
<dbReference type="RefSeq" id="NP_389803.1">
    <property type="nucleotide sequence ID" value="NC_000964.3"/>
</dbReference>
<dbReference type="RefSeq" id="WP_004399229.1">
    <property type="nucleotide sequence ID" value="NZ_OZ025638.1"/>
</dbReference>
<dbReference type="SMR" id="O34748"/>
<dbReference type="FunCoup" id="O34748">
    <property type="interactions" value="658"/>
</dbReference>
<dbReference type="STRING" id="224308.BSU19220"/>
<dbReference type="PaxDb" id="224308-BSU19220"/>
<dbReference type="EnsemblBacteria" id="CAB13814">
    <property type="protein sequence ID" value="CAB13814"/>
    <property type="gene ID" value="BSU_19220"/>
</dbReference>
<dbReference type="GeneID" id="939671"/>
<dbReference type="KEGG" id="bsu:BSU19220"/>
<dbReference type="PATRIC" id="fig|224308.179.peg.2100"/>
<dbReference type="eggNOG" id="COG0514">
    <property type="taxonomic scope" value="Bacteria"/>
</dbReference>
<dbReference type="InParanoid" id="O34748"/>
<dbReference type="OrthoDB" id="9763310at2"/>
<dbReference type="PhylomeDB" id="O34748"/>
<dbReference type="BioCyc" id="BSUB:BSU19220-MONOMER"/>
<dbReference type="Proteomes" id="UP000001570">
    <property type="component" value="Chromosome"/>
</dbReference>
<dbReference type="GO" id="GO:0043590">
    <property type="term" value="C:bacterial nucleoid"/>
    <property type="evidence" value="ECO:0000314"/>
    <property type="project" value="UniProtKB"/>
</dbReference>
<dbReference type="GO" id="GO:0005694">
    <property type="term" value="C:chromosome"/>
    <property type="evidence" value="ECO:0000318"/>
    <property type="project" value="GO_Central"/>
</dbReference>
<dbReference type="GO" id="GO:0005737">
    <property type="term" value="C:cytoplasm"/>
    <property type="evidence" value="ECO:0000318"/>
    <property type="project" value="GO_Central"/>
</dbReference>
<dbReference type="GO" id="GO:0030894">
    <property type="term" value="C:replisome"/>
    <property type="evidence" value="ECO:0000318"/>
    <property type="project" value="GO_Central"/>
</dbReference>
<dbReference type="GO" id="GO:0043138">
    <property type="term" value="F:3'-5' DNA helicase activity"/>
    <property type="evidence" value="ECO:0000318"/>
    <property type="project" value="GO_Central"/>
</dbReference>
<dbReference type="GO" id="GO:0005524">
    <property type="term" value="F:ATP binding"/>
    <property type="evidence" value="ECO:0007669"/>
    <property type="project" value="UniProtKB-KW"/>
</dbReference>
<dbReference type="GO" id="GO:0016887">
    <property type="term" value="F:ATP hydrolysis activity"/>
    <property type="evidence" value="ECO:0007669"/>
    <property type="project" value="RHEA"/>
</dbReference>
<dbReference type="GO" id="GO:0003677">
    <property type="term" value="F:DNA binding"/>
    <property type="evidence" value="ECO:0007669"/>
    <property type="project" value="UniProtKB-KW"/>
</dbReference>
<dbReference type="GO" id="GO:0009378">
    <property type="term" value="F:four-way junction helicase activity"/>
    <property type="evidence" value="ECO:0000318"/>
    <property type="project" value="GO_Central"/>
</dbReference>
<dbReference type="GO" id="GO:0046872">
    <property type="term" value="F:metal ion binding"/>
    <property type="evidence" value="ECO:0007669"/>
    <property type="project" value="UniProtKB-KW"/>
</dbReference>
<dbReference type="GO" id="GO:0006310">
    <property type="term" value="P:DNA recombination"/>
    <property type="evidence" value="ECO:0000318"/>
    <property type="project" value="GO_Central"/>
</dbReference>
<dbReference type="GO" id="GO:0006281">
    <property type="term" value="P:DNA repair"/>
    <property type="evidence" value="ECO:0000318"/>
    <property type="project" value="GO_Central"/>
</dbReference>
<dbReference type="GO" id="GO:0006260">
    <property type="term" value="P:DNA replication"/>
    <property type="evidence" value="ECO:0007669"/>
    <property type="project" value="InterPro"/>
</dbReference>
<dbReference type="GO" id="GO:0009432">
    <property type="term" value="P:SOS response"/>
    <property type="evidence" value="ECO:0007669"/>
    <property type="project" value="UniProtKB-KW"/>
</dbReference>
<dbReference type="CDD" id="cd17920">
    <property type="entry name" value="DEXHc_RecQ"/>
    <property type="match status" value="1"/>
</dbReference>
<dbReference type="CDD" id="cd18794">
    <property type="entry name" value="SF2_C_RecQ"/>
    <property type="match status" value="1"/>
</dbReference>
<dbReference type="FunFam" id="1.10.10.10:FF:000564">
    <property type="entry name" value="ATP-dependent DNA helicase RecQ"/>
    <property type="match status" value="1"/>
</dbReference>
<dbReference type="FunFam" id="1.10.150.80:FF:000002">
    <property type="entry name" value="ATP-dependent DNA helicase RecQ"/>
    <property type="match status" value="1"/>
</dbReference>
<dbReference type="FunFam" id="3.40.50.300:FF:000296">
    <property type="entry name" value="ATP-dependent DNA helicase RecQ"/>
    <property type="match status" value="1"/>
</dbReference>
<dbReference type="FunFam" id="3.40.50.300:FF:001746">
    <property type="entry name" value="ATP-dependent DNA helicase recQ"/>
    <property type="match status" value="1"/>
</dbReference>
<dbReference type="Gene3D" id="1.10.150.80">
    <property type="entry name" value="HRDC domain"/>
    <property type="match status" value="1"/>
</dbReference>
<dbReference type="Gene3D" id="3.40.50.300">
    <property type="entry name" value="P-loop containing nucleotide triphosphate hydrolases"/>
    <property type="match status" value="2"/>
</dbReference>
<dbReference type="Gene3D" id="1.10.10.10">
    <property type="entry name" value="Winged helix-like DNA-binding domain superfamily/Winged helix DNA-binding domain"/>
    <property type="match status" value="1"/>
</dbReference>
<dbReference type="InterPro" id="IPR011545">
    <property type="entry name" value="DEAD/DEAH_box_helicase_dom"/>
</dbReference>
<dbReference type="InterPro" id="IPR004589">
    <property type="entry name" value="DNA_helicase_ATP-dep_RecQ"/>
</dbReference>
<dbReference type="InterPro" id="IPR006293">
    <property type="entry name" value="DNA_helicase_ATP-dep_RecQ_bac"/>
</dbReference>
<dbReference type="InterPro" id="IPR014001">
    <property type="entry name" value="Helicase_ATP-bd"/>
</dbReference>
<dbReference type="InterPro" id="IPR001650">
    <property type="entry name" value="Helicase_C-like"/>
</dbReference>
<dbReference type="InterPro" id="IPR010997">
    <property type="entry name" value="HRDC-like_sf"/>
</dbReference>
<dbReference type="InterPro" id="IPR002121">
    <property type="entry name" value="HRDC_dom"/>
</dbReference>
<dbReference type="InterPro" id="IPR044876">
    <property type="entry name" value="HRDC_dom_sf"/>
</dbReference>
<dbReference type="InterPro" id="IPR027417">
    <property type="entry name" value="P-loop_NTPase"/>
</dbReference>
<dbReference type="InterPro" id="IPR032284">
    <property type="entry name" value="RecQ_Zn-bd"/>
</dbReference>
<dbReference type="InterPro" id="IPR018982">
    <property type="entry name" value="RQC_domain"/>
</dbReference>
<dbReference type="InterPro" id="IPR036388">
    <property type="entry name" value="WH-like_DNA-bd_sf"/>
</dbReference>
<dbReference type="InterPro" id="IPR036390">
    <property type="entry name" value="WH_DNA-bd_sf"/>
</dbReference>
<dbReference type="NCBIfam" id="TIGR01389">
    <property type="entry name" value="recQ"/>
    <property type="match status" value="1"/>
</dbReference>
<dbReference type="NCBIfam" id="TIGR00614">
    <property type="entry name" value="recQ_fam"/>
    <property type="match status" value="1"/>
</dbReference>
<dbReference type="PANTHER" id="PTHR13710:SF105">
    <property type="entry name" value="ATP-DEPENDENT DNA HELICASE Q1"/>
    <property type="match status" value="1"/>
</dbReference>
<dbReference type="PANTHER" id="PTHR13710">
    <property type="entry name" value="DNA HELICASE RECQ FAMILY MEMBER"/>
    <property type="match status" value="1"/>
</dbReference>
<dbReference type="Pfam" id="PF00270">
    <property type="entry name" value="DEAD"/>
    <property type="match status" value="1"/>
</dbReference>
<dbReference type="Pfam" id="PF00271">
    <property type="entry name" value="Helicase_C"/>
    <property type="match status" value="1"/>
</dbReference>
<dbReference type="Pfam" id="PF00570">
    <property type="entry name" value="HRDC"/>
    <property type="match status" value="1"/>
</dbReference>
<dbReference type="Pfam" id="PF16124">
    <property type="entry name" value="RecQ_Zn_bind"/>
    <property type="match status" value="1"/>
</dbReference>
<dbReference type="Pfam" id="PF09382">
    <property type="entry name" value="RQC"/>
    <property type="match status" value="1"/>
</dbReference>
<dbReference type="SMART" id="SM00487">
    <property type="entry name" value="DEXDc"/>
    <property type="match status" value="1"/>
</dbReference>
<dbReference type="SMART" id="SM00490">
    <property type="entry name" value="HELICc"/>
    <property type="match status" value="1"/>
</dbReference>
<dbReference type="SMART" id="SM00341">
    <property type="entry name" value="HRDC"/>
    <property type="match status" value="1"/>
</dbReference>
<dbReference type="SMART" id="SM00956">
    <property type="entry name" value="RQC"/>
    <property type="match status" value="1"/>
</dbReference>
<dbReference type="SUPFAM" id="SSF47819">
    <property type="entry name" value="HRDC-like"/>
    <property type="match status" value="1"/>
</dbReference>
<dbReference type="SUPFAM" id="SSF52540">
    <property type="entry name" value="P-loop containing nucleoside triphosphate hydrolases"/>
    <property type="match status" value="1"/>
</dbReference>
<dbReference type="SUPFAM" id="SSF46785">
    <property type="entry name" value="Winged helix' DNA-binding domain"/>
    <property type="match status" value="1"/>
</dbReference>
<dbReference type="PROSITE" id="PS51192">
    <property type="entry name" value="HELICASE_ATP_BIND_1"/>
    <property type="match status" value="1"/>
</dbReference>
<dbReference type="PROSITE" id="PS51194">
    <property type="entry name" value="HELICASE_CTER"/>
    <property type="match status" value="1"/>
</dbReference>
<dbReference type="PROSITE" id="PS50967">
    <property type="entry name" value="HRDC"/>
    <property type="match status" value="1"/>
</dbReference>